<dbReference type="EC" id="2.1.1.74" evidence="1"/>
<dbReference type="EMBL" id="CP000896">
    <property type="protein sequence ID" value="ABX81760.1"/>
    <property type="molecule type" value="Genomic_DNA"/>
</dbReference>
<dbReference type="RefSeq" id="WP_012243091.1">
    <property type="nucleotide sequence ID" value="NC_010163.1"/>
</dbReference>
<dbReference type="SMR" id="A9NHD0"/>
<dbReference type="STRING" id="441768.ACL_1161"/>
<dbReference type="GeneID" id="41339301"/>
<dbReference type="KEGG" id="acl:ACL_1161"/>
<dbReference type="eggNOG" id="COG1206">
    <property type="taxonomic scope" value="Bacteria"/>
</dbReference>
<dbReference type="HOGENOM" id="CLU_033057_1_0_14"/>
<dbReference type="OrthoDB" id="9803114at2"/>
<dbReference type="Proteomes" id="UP000008558">
    <property type="component" value="Chromosome"/>
</dbReference>
<dbReference type="GO" id="GO:0005829">
    <property type="term" value="C:cytosol"/>
    <property type="evidence" value="ECO:0007669"/>
    <property type="project" value="TreeGrafter"/>
</dbReference>
<dbReference type="GO" id="GO:0050660">
    <property type="term" value="F:flavin adenine dinucleotide binding"/>
    <property type="evidence" value="ECO:0007669"/>
    <property type="project" value="UniProtKB-UniRule"/>
</dbReference>
<dbReference type="GO" id="GO:0047151">
    <property type="term" value="F:tRNA (uracil(54)-C5)-methyltransferase activity, 5,10-methylenetetrahydrofolate-dependent"/>
    <property type="evidence" value="ECO:0007669"/>
    <property type="project" value="UniProtKB-UniRule"/>
</dbReference>
<dbReference type="GO" id="GO:0030488">
    <property type="term" value="P:tRNA methylation"/>
    <property type="evidence" value="ECO:0007669"/>
    <property type="project" value="TreeGrafter"/>
</dbReference>
<dbReference type="GO" id="GO:0002098">
    <property type="term" value="P:tRNA wobble uridine modification"/>
    <property type="evidence" value="ECO:0007669"/>
    <property type="project" value="TreeGrafter"/>
</dbReference>
<dbReference type="Gene3D" id="3.50.50.60">
    <property type="entry name" value="FAD/NAD(P)-binding domain"/>
    <property type="match status" value="2"/>
</dbReference>
<dbReference type="HAMAP" id="MF_01037">
    <property type="entry name" value="TrmFO"/>
    <property type="match status" value="1"/>
</dbReference>
<dbReference type="InterPro" id="IPR036188">
    <property type="entry name" value="FAD/NAD-bd_sf"/>
</dbReference>
<dbReference type="InterPro" id="IPR002218">
    <property type="entry name" value="MnmG-rel"/>
</dbReference>
<dbReference type="InterPro" id="IPR040131">
    <property type="entry name" value="MnmG_N"/>
</dbReference>
<dbReference type="InterPro" id="IPR004417">
    <property type="entry name" value="TrmFO"/>
</dbReference>
<dbReference type="NCBIfam" id="TIGR00137">
    <property type="entry name" value="gid_trmFO"/>
    <property type="match status" value="1"/>
</dbReference>
<dbReference type="NCBIfam" id="NF003739">
    <property type="entry name" value="PRK05335.1"/>
    <property type="match status" value="1"/>
</dbReference>
<dbReference type="PANTHER" id="PTHR11806">
    <property type="entry name" value="GLUCOSE INHIBITED DIVISION PROTEIN A"/>
    <property type="match status" value="1"/>
</dbReference>
<dbReference type="PANTHER" id="PTHR11806:SF2">
    <property type="entry name" value="METHYLENETETRAHYDROFOLATE--TRNA-(URACIL-5-)-METHYLTRANSFERASE TRMFO"/>
    <property type="match status" value="1"/>
</dbReference>
<dbReference type="Pfam" id="PF01134">
    <property type="entry name" value="GIDA"/>
    <property type="match status" value="1"/>
</dbReference>
<dbReference type="SUPFAM" id="SSF51905">
    <property type="entry name" value="FAD/NAD(P)-binding domain"/>
    <property type="match status" value="1"/>
</dbReference>
<keyword id="KW-0963">Cytoplasm</keyword>
<keyword id="KW-0274">FAD</keyword>
<keyword id="KW-0285">Flavoprotein</keyword>
<keyword id="KW-0489">Methyltransferase</keyword>
<keyword id="KW-0520">NAD</keyword>
<keyword id="KW-0521">NADP</keyword>
<keyword id="KW-1185">Reference proteome</keyword>
<keyword id="KW-0808">Transferase</keyword>
<keyword id="KW-0819">tRNA processing</keyword>
<feature type="chain" id="PRO_0000346315" description="Methylenetetrahydrofolate--tRNA-(uracil-5-)-methyltransferase TrmFO">
    <location>
        <begin position="1"/>
        <end position="427"/>
    </location>
</feature>
<feature type="binding site" evidence="1">
    <location>
        <begin position="6"/>
        <end position="11"/>
    </location>
    <ligand>
        <name>FAD</name>
        <dbReference type="ChEBI" id="CHEBI:57692"/>
    </ligand>
</feature>
<name>TRMFO_ACHLI</name>
<accession>A9NHD0</accession>
<evidence type="ECO:0000255" key="1">
    <source>
        <dbReference type="HAMAP-Rule" id="MF_01037"/>
    </source>
</evidence>
<proteinExistence type="inferred from homology"/>
<protein>
    <recommendedName>
        <fullName evidence="1">Methylenetetrahydrofolate--tRNA-(uracil-5-)-methyltransferase TrmFO</fullName>
        <ecNumber evidence="1">2.1.1.74</ecNumber>
    </recommendedName>
    <alternativeName>
        <fullName evidence="1">Folate-dependent tRNA (uracil-5-)-methyltransferase</fullName>
    </alternativeName>
    <alternativeName>
        <fullName evidence="1">Folate-dependent tRNA(M-5-U54)-methyltransferase</fullName>
    </alternativeName>
</protein>
<gene>
    <name evidence="1" type="primary">trmFO</name>
    <name type="ordered locus">ACL_1161</name>
</gene>
<organism>
    <name type="scientific">Acholeplasma laidlawii (strain PG-8A)</name>
    <dbReference type="NCBI Taxonomy" id="441768"/>
    <lineage>
        <taxon>Bacteria</taxon>
        <taxon>Bacillati</taxon>
        <taxon>Mycoplasmatota</taxon>
        <taxon>Mollicutes</taxon>
        <taxon>Acholeplasmatales</taxon>
        <taxon>Acholeplasmataceae</taxon>
        <taxon>Acholeplasma</taxon>
    </lineage>
</organism>
<reference key="1">
    <citation type="journal article" date="2011" name="J. Bacteriol.">
        <title>Complete genome and proteome of Acholeplasma laidlawii.</title>
        <authorList>
            <person name="Lazarev V.N."/>
            <person name="Levitskii S.A."/>
            <person name="Basovskii Y.I."/>
            <person name="Chukin M.M."/>
            <person name="Akopian T.A."/>
            <person name="Vereshchagin V.V."/>
            <person name="Kostrjukova E.S."/>
            <person name="Kovaleva G.Y."/>
            <person name="Kazanov M.D."/>
            <person name="Malko D.B."/>
            <person name="Vitreschak A.G."/>
            <person name="Sernova N.V."/>
            <person name="Gelfand M.S."/>
            <person name="Demina I.A."/>
            <person name="Serebryakova M.V."/>
            <person name="Galyamina M.A."/>
            <person name="Vtyurin N.N."/>
            <person name="Rogov S.I."/>
            <person name="Alexeev D.G."/>
            <person name="Ladygina V.G."/>
            <person name="Govorun V.M."/>
        </authorList>
    </citation>
    <scope>NUCLEOTIDE SEQUENCE [LARGE SCALE GENOMIC DNA]</scope>
    <source>
        <strain>PG-8A</strain>
    </source>
</reference>
<sequence>MIKIIGAGLAGSEAAYYLANKGYKVKLYEMRPKKNTPAHVTKNFAELVCSNSFRSNDPLNAVGLLKVEMTHFNSLILEAANIHKVPAGSSLAVDRNLFSEYVTEKIKSHENIEVIHEEVTSLDPNEYTIIAAGPLASDLLSKQIQDHLHLESLNFFDAVAPIIDAKSINMDIAYLKSRYDKDEAAYINCPMNKQEYLEFYKALMTAESVAPKDFENNVFEGCMPVEDMGKRGIDTLRFGPLKPVGLTKPNGEKPYAVVQLRQDDVNKTMYNMVGFQTHMKWGDQKRVIQMIPGLENAEILRYGVIHKNTYLESPKHLNNAFQVRDIPKWFFAGQISGVEGYIESAASGLNVAINLHNLLTKGEIRPLPVDTMMGAMARYISNYHQYFVPMNANFGLFDQIEAHKTVRKQMYYDRSMHALKEYIEGGI</sequence>
<comment type="function">
    <text evidence="1">Catalyzes the folate-dependent formation of 5-methyl-uridine at position 54 (M-5-U54) in all tRNAs.</text>
</comment>
<comment type="catalytic activity">
    <reaction evidence="1">
        <text>uridine(54) in tRNA + (6R)-5,10-methylene-5,6,7,8-tetrahydrofolate + NADH + H(+) = 5-methyluridine(54) in tRNA + (6S)-5,6,7,8-tetrahydrofolate + NAD(+)</text>
        <dbReference type="Rhea" id="RHEA:16873"/>
        <dbReference type="Rhea" id="RHEA-COMP:10167"/>
        <dbReference type="Rhea" id="RHEA-COMP:10193"/>
        <dbReference type="ChEBI" id="CHEBI:15378"/>
        <dbReference type="ChEBI" id="CHEBI:15636"/>
        <dbReference type="ChEBI" id="CHEBI:57453"/>
        <dbReference type="ChEBI" id="CHEBI:57540"/>
        <dbReference type="ChEBI" id="CHEBI:57945"/>
        <dbReference type="ChEBI" id="CHEBI:65315"/>
        <dbReference type="ChEBI" id="CHEBI:74447"/>
        <dbReference type="EC" id="2.1.1.74"/>
    </reaction>
</comment>
<comment type="catalytic activity">
    <reaction evidence="1">
        <text>uridine(54) in tRNA + (6R)-5,10-methylene-5,6,7,8-tetrahydrofolate + NADPH + H(+) = 5-methyluridine(54) in tRNA + (6S)-5,6,7,8-tetrahydrofolate + NADP(+)</text>
        <dbReference type="Rhea" id="RHEA:62372"/>
        <dbReference type="Rhea" id="RHEA-COMP:10167"/>
        <dbReference type="Rhea" id="RHEA-COMP:10193"/>
        <dbReference type="ChEBI" id="CHEBI:15378"/>
        <dbReference type="ChEBI" id="CHEBI:15636"/>
        <dbReference type="ChEBI" id="CHEBI:57453"/>
        <dbReference type="ChEBI" id="CHEBI:57783"/>
        <dbReference type="ChEBI" id="CHEBI:58349"/>
        <dbReference type="ChEBI" id="CHEBI:65315"/>
        <dbReference type="ChEBI" id="CHEBI:74447"/>
        <dbReference type="EC" id="2.1.1.74"/>
    </reaction>
</comment>
<comment type="cofactor">
    <cofactor evidence="1">
        <name>FAD</name>
        <dbReference type="ChEBI" id="CHEBI:57692"/>
    </cofactor>
</comment>
<comment type="subcellular location">
    <subcellularLocation>
        <location evidence="1">Cytoplasm</location>
    </subcellularLocation>
</comment>
<comment type="similarity">
    <text evidence="1">Belongs to the MnmG family. TrmFO subfamily.</text>
</comment>